<sequence length="246" mass="27605">MTYKLVLLRHGQSAWNKTNQFTGWVDVPLTEQGEAEAKRGGELLKEKNVLPDIVFTSLLRRAINTANIALDAADRLWIPVQRDWRLNERHYGALQGKNKTEIREEYGDEKFMLWRRSYATPPPEIDPNDQYAQNNDPRYAGDPVPEAECLANVVERVKPYFESAIEPELKAGKTVLIAAHGNSLRAIVKMLDNLSEEEIAKVNIPTAIPLLYELDENFKPIKPRGEYLDPEAAAAGAAAVAAQGQK</sequence>
<name>GPMA_BIFLD</name>
<dbReference type="EC" id="5.4.2.11" evidence="1"/>
<dbReference type="EMBL" id="CP000605">
    <property type="protein sequence ID" value="ACD99224.1"/>
    <property type="molecule type" value="Genomic_DNA"/>
</dbReference>
<dbReference type="RefSeq" id="WP_007052347.1">
    <property type="nucleotide sequence ID" value="NZ_AABM02000031.1"/>
</dbReference>
<dbReference type="SMR" id="B3DQI6"/>
<dbReference type="KEGG" id="blj:BLD_1779"/>
<dbReference type="HOGENOM" id="CLU_033323_1_1_11"/>
<dbReference type="UniPathway" id="UPA00109">
    <property type="reaction ID" value="UER00186"/>
</dbReference>
<dbReference type="Proteomes" id="UP000002419">
    <property type="component" value="Chromosome"/>
</dbReference>
<dbReference type="GO" id="GO:0004619">
    <property type="term" value="F:phosphoglycerate mutase activity"/>
    <property type="evidence" value="ECO:0007669"/>
    <property type="project" value="UniProtKB-EC"/>
</dbReference>
<dbReference type="GO" id="GO:0006094">
    <property type="term" value="P:gluconeogenesis"/>
    <property type="evidence" value="ECO:0007669"/>
    <property type="project" value="UniProtKB-UniRule"/>
</dbReference>
<dbReference type="GO" id="GO:0006096">
    <property type="term" value="P:glycolytic process"/>
    <property type="evidence" value="ECO:0007669"/>
    <property type="project" value="UniProtKB-UniRule"/>
</dbReference>
<dbReference type="CDD" id="cd07067">
    <property type="entry name" value="HP_PGM_like"/>
    <property type="match status" value="1"/>
</dbReference>
<dbReference type="FunFam" id="3.40.50.1240:FF:000003">
    <property type="entry name" value="2,3-bisphosphoglycerate-dependent phosphoglycerate mutase"/>
    <property type="match status" value="1"/>
</dbReference>
<dbReference type="Gene3D" id="3.40.50.1240">
    <property type="entry name" value="Phosphoglycerate mutase-like"/>
    <property type="match status" value="1"/>
</dbReference>
<dbReference type="HAMAP" id="MF_01039">
    <property type="entry name" value="PGAM_GpmA"/>
    <property type="match status" value="1"/>
</dbReference>
<dbReference type="InterPro" id="IPR013078">
    <property type="entry name" value="His_Pase_superF_clade-1"/>
</dbReference>
<dbReference type="InterPro" id="IPR029033">
    <property type="entry name" value="His_PPase_superfam"/>
</dbReference>
<dbReference type="InterPro" id="IPR001345">
    <property type="entry name" value="PG/BPGM_mutase_AS"/>
</dbReference>
<dbReference type="InterPro" id="IPR005952">
    <property type="entry name" value="Phosphogly_mut1"/>
</dbReference>
<dbReference type="NCBIfam" id="TIGR01258">
    <property type="entry name" value="pgm_1"/>
    <property type="match status" value="1"/>
</dbReference>
<dbReference type="NCBIfam" id="NF010713">
    <property type="entry name" value="PRK14115.1"/>
    <property type="match status" value="1"/>
</dbReference>
<dbReference type="NCBIfam" id="NF010718">
    <property type="entry name" value="PRK14120.1"/>
    <property type="match status" value="1"/>
</dbReference>
<dbReference type="PANTHER" id="PTHR11931">
    <property type="entry name" value="PHOSPHOGLYCERATE MUTASE"/>
    <property type="match status" value="1"/>
</dbReference>
<dbReference type="Pfam" id="PF00300">
    <property type="entry name" value="His_Phos_1"/>
    <property type="match status" value="2"/>
</dbReference>
<dbReference type="PIRSF" id="PIRSF000709">
    <property type="entry name" value="6PFK_2-Ptase"/>
    <property type="match status" value="1"/>
</dbReference>
<dbReference type="SMART" id="SM00855">
    <property type="entry name" value="PGAM"/>
    <property type="match status" value="1"/>
</dbReference>
<dbReference type="SUPFAM" id="SSF53254">
    <property type="entry name" value="Phosphoglycerate mutase-like"/>
    <property type="match status" value="1"/>
</dbReference>
<dbReference type="PROSITE" id="PS00175">
    <property type="entry name" value="PG_MUTASE"/>
    <property type="match status" value="1"/>
</dbReference>
<evidence type="ECO:0000255" key="1">
    <source>
        <dbReference type="HAMAP-Rule" id="MF_01039"/>
    </source>
</evidence>
<reference key="1">
    <citation type="journal article" date="2008" name="BMC Genomics">
        <title>Comparative genomic analysis of the gut bacterium Bifidobacterium longum reveals loci susceptible to deletion during pure culture growth.</title>
        <authorList>
            <person name="Lee J.H."/>
            <person name="Karamychev V.N."/>
            <person name="Kozyavkin S.A."/>
            <person name="Mills D."/>
            <person name="Pavlov A.R."/>
            <person name="Pavlova N.V."/>
            <person name="Polouchine N.N."/>
            <person name="Richardson P.M."/>
            <person name="Shakhova V.V."/>
            <person name="Slesarev A.I."/>
            <person name="Weimer B."/>
            <person name="O'Sullivan D.J."/>
        </authorList>
    </citation>
    <scope>NUCLEOTIDE SEQUENCE [LARGE SCALE GENOMIC DNA]</scope>
    <source>
        <strain>DJO10A</strain>
    </source>
</reference>
<feature type="chain" id="PRO_1000135920" description="2,3-bisphosphoglycerate-dependent phosphoglycerate mutase">
    <location>
        <begin position="1"/>
        <end position="246"/>
    </location>
</feature>
<feature type="active site" description="Tele-phosphohistidine intermediate" evidence="1">
    <location>
        <position position="10"/>
    </location>
</feature>
<feature type="active site" description="Proton donor/acceptor" evidence="1">
    <location>
        <position position="88"/>
    </location>
</feature>
<feature type="binding site" evidence="1">
    <location>
        <begin position="9"/>
        <end position="16"/>
    </location>
    <ligand>
        <name>substrate</name>
    </ligand>
</feature>
<feature type="binding site" evidence="1">
    <location>
        <begin position="22"/>
        <end position="23"/>
    </location>
    <ligand>
        <name>substrate</name>
    </ligand>
</feature>
<feature type="binding site" evidence="1">
    <location>
        <position position="61"/>
    </location>
    <ligand>
        <name>substrate</name>
    </ligand>
</feature>
<feature type="binding site" evidence="1">
    <location>
        <begin position="88"/>
        <end position="91"/>
    </location>
    <ligand>
        <name>substrate</name>
    </ligand>
</feature>
<feature type="binding site" evidence="1">
    <location>
        <position position="99"/>
    </location>
    <ligand>
        <name>substrate</name>
    </ligand>
</feature>
<feature type="binding site" evidence="1">
    <location>
        <begin position="115"/>
        <end position="116"/>
    </location>
    <ligand>
        <name>substrate</name>
    </ligand>
</feature>
<feature type="binding site" evidence="1">
    <location>
        <begin position="181"/>
        <end position="182"/>
    </location>
    <ligand>
        <name>substrate</name>
    </ligand>
</feature>
<feature type="site" description="Transition state stabilizer" evidence="1">
    <location>
        <position position="180"/>
    </location>
</feature>
<comment type="function">
    <text evidence="1">Catalyzes the interconversion of 2-phosphoglycerate and 3-phosphoglycerate.</text>
</comment>
<comment type="catalytic activity">
    <reaction evidence="1">
        <text>(2R)-2-phosphoglycerate = (2R)-3-phosphoglycerate</text>
        <dbReference type="Rhea" id="RHEA:15901"/>
        <dbReference type="ChEBI" id="CHEBI:58272"/>
        <dbReference type="ChEBI" id="CHEBI:58289"/>
        <dbReference type="EC" id="5.4.2.11"/>
    </reaction>
</comment>
<comment type="pathway">
    <text evidence="1">Carbohydrate degradation; glycolysis; pyruvate from D-glyceraldehyde 3-phosphate: step 3/5.</text>
</comment>
<comment type="similarity">
    <text evidence="1">Belongs to the phosphoglycerate mutase family. BPG-dependent PGAM subfamily.</text>
</comment>
<keyword id="KW-0312">Gluconeogenesis</keyword>
<keyword id="KW-0324">Glycolysis</keyword>
<keyword id="KW-0413">Isomerase</keyword>
<protein>
    <recommendedName>
        <fullName evidence="1">2,3-bisphosphoglycerate-dependent phosphoglycerate mutase</fullName>
        <shortName evidence="1">BPG-dependent PGAM</shortName>
        <shortName evidence="1">PGAM</shortName>
        <shortName evidence="1">Phosphoglyceromutase</shortName>
        <shortName evidence="1">dPGM</shortName>
        <ecNumber evidence="1">5.4.2.11</ecNumber>
    </recommendedName>
</protein>
<organism>
    <name type="scientific">Bifidobacterium longum (strain DJO10A)</name>
    <dbReference type="NCBI Taxonomy" id="205913"/>
    <lineage>
        <taxon>Bacteria</taxon>
        <taxon>Bacillati</taxon>
        <taxon>Actinomycetota</taxon>
        <taxon>Actinomycetes</taxon>
        <taxon>Bifidobacteriales</taxon>
        <taxon>Bifidobacteriaceae</taxon>
        <taxon>Bifidobacterium</taxon>
    </lineage>
</organism>
<gene>
    <name evidence="1" type="primary">gpmA</name>
    <name type="ordered locus">BLD_1779</name>
</gene>
<proteinExistence type="inferred from homology"/>
<accession>B3DQI6</accession>